<gene>
    <name evidence="1" type="primary">apt</name>
    <name type="ordered locus">DIP1369</name>
</gene>
<dbReference type="EC" id="2.4.2.7" evidence="1"/>
<dbReference type="EMBL" id="BX248358">
    <property type="protein sequence ID" value="CAE49900.1"/>
    <property type="molecule type" value="Genomic_DNA"/>
</dbReference>
<dbReference type="RefSeq" id="WP_010935015.1">
    <property type="nucleotide sequence ID" value="NC_002935.2"/>
</dbReference>
<dbReference type="SMR" id="Q6NGY0"/>
<dbReference type="STRING" id="257309.DIP1369"/>
<dbReference type="KEGG" id="cdi:DIP1369"/>
<dbReference type="HOGENOM" id="CLU_063339_3_3_11"/>
<dbReference type="UniPathway" id="UPA00588">
    <property type="reaction ID" value="UER00646"/>
</dbReference>
<dbReference type="Proteomes" id="UP000002198">
    <property type="component" value="Chromosome"/>
</dbReference>
<dbReference type="GO" id="GO:0005737">
    <property type="term" value="C:cytoplasm"/>
    <property type="evidence" value="ECO:0007669"/>
    <property type="project" value="UniProtKB-SubCell"/>
</dbReference>
<dbReference type="GO" id="GO:0002055">
    <property type="term" value="F:adenine binding"/>
    <property type="evidence" value="ECO:0007669"/>
    <property type="project" value="TreeGrafter"/>
</dbReference>
<dbReference type="GO" id="GO:0003999">
    <property type="term" value="F:adenine phosphoribosyltransferase activity"/>
    <property type="evidence" value="ECO:0007669"/>
    <property type="project" value="UniProtKB-UniRule"/>
</dbReference>
<dbReference type="GO" id="GO:0016208">
    <property type="term" value="F:AMP binding"/>
    <property type="evidence" value="ECO:0007669"/>
    <property type="project" value="TreeGrafter"/>
</dbReference>
<dbReference type="GO" id="GO:0006168">
    <property type="term" value="P:adenine salvage"/>
    <property type="evidence" value="ECO:0007669"/>
    <property type="project" value="InterPro"/>
</dbReference>
<dbReference type="GO" id="GO:0044209">
    <property type="term" value="P:AMP salvage"/>
    <property type="evidence" value="ECO:0007669"/>
    <property type="project" value="UniProtKB-UniRule"/>
</dbReference>
<dbReference type="GO" id="GO:0006166">
    <property type="term" value="P:purine ribonucleoside salvage"/>
    <property type="evidence" value="ECO:0007669"/>
    <property type="project" value="UniProtKB-KW"/>
</dbReference>
<dbReference type="CDD" id="cd06223">
    <property type="entry name" value="PRTases_typeI"/>
    <property type="match status" value="1"/>
</dbReference>
<dbReference type="FunFam" id="3.40.50.2020:FF:000021">
    <property type="entry name" value="Adenine phosphoribosyltransferase"/>
    <property type="match status" value="1"/>
</dbReference>
<dbReference type="Gene3D" id="3.40.50.2020">
    <property type="match status" value="1"/>
</dbReference>
<dbReference type="HAMAP" id="MF_00004">
    <property type="entry name" value="Aden_phosphoribosyltr"/>
    <property type="match status" value="1"/>
</dbReference>
<dbReference type="InterPro" id="IPR005764">
    <property type="entry name" value="Ade_phspho_trans"/>
</dbReference>
<dbReference type="InterPro" id="IPR000836">
    <property type="entry name" value="PRibTrfase_dom"/>
</dbReference>
<dbReference type="InterPro" id="IPR029057">
    <property type="entry name" value="PRTase-like"/>
</dbReference>
<dbReference type="InterPro" id="IPR050054">
    <property type="entry name" value="UPRTase/APRTase"/>
</dbReference>
<dbReference type="NCBIfam" id="NF002634">
    <property type="entry name" value="PRK02304.1-3"/>
    <property type="match status" value="1"/>
</dbReference>
<dbReference type="NCBIfam" id="NF002636">
    <property type="entry name" value="PRK02304.1-5"/>
    <property type="match status" value="1"/>
</dbReference>
<dbReference type="PANTHER" id="PTHR32315">
    <property type="entry name" value="ADENINE PHOSPHORIBOSYLTRANSFERASE"/>
    <property type="match status" value="1"/>
</dbReference>
<dbReference type="PANTHER" id="PTHR32315:SF3">
    <property type="entry name" value="ADENINE PHOSPHORIBOSYLTRANSFERASE"/>
    <property type="match status" value="1"/>
</dbReference>
<dbReference type="Pfam" id="PF00156">
    <property type="entry name" value="Pribosyltran"/>
    <property type="match status" value="1"/>
</dbReference>
<dbReference type="SUPFAM" id="SSF53271">
    <property type="entry name" value="PRTase-like"/>
    <property type="match status" value="1"/>
</dbReference>
<dbReference type="PROSITE" id="PS00103">
    <property type="entry name" value="PUR_PYR_PR_TRANSFER"/>
    <property type="match status" value="1"/>
</dbReference>
<organism>
    <name type="scientific">Corynebacterium diphtheriae (strain ATCC 700971 / NCTC 13129 / Biotype gravis)</name>
    <dbReference type="NCBI Taxonomy" id="257309"/>
    <lineage>
        <taxon>Bacteria</taxon>
        <taxon>Bacillati</taxon>
        <taxon>Actinomycetota</taxon>
        <taxon>Actinomycetes</taxon>
        <taxon>Mycobacteriales</taxon>
        <taxon>Corynebacteriaceae</taxon>
        <taxon>Corynebacterium</taxon>
    </lineage>
</organism>
<reference key="1">
    <citation type="journal article" date="2003" name="Nucleic Acids Res.">
        <title>The complete genome sequence and analysis of Corynebacterium diphtheriae NCTC13129.</title>
        <authorList>
            <person name="Cerdeno-Tarraga A.-M."/>
            <person name="Efstratiou A."/>
            <person name="Dover L.G."/>
            <person name="Holden M.T.G."/>
            <person name="Pallen M.J."/>
            <person name="Bentley S.D."/>
            <person name="Besra G.S."/>
            <person name="Churcher C.M."/>
            <person name="James K.D."/>
            <person name="De Zoysa A."/>
            <person name="Chillingworth T."/>
            <person name="Cronin A."/>
            <person name="Dowd L."/>
            <person name="Feltwell T."/>
            <person name="Hamlin N."/>
            <person name="Holroyd S."/>
            <person name="Jagels K."/>
            <person name="Moule S."/>
            <person name="Quail M.A."/>
            <person name="Rabbinowitsch E."/>
            <person name="Rutherford K.M."/>
            <person name="Thomson N.R."/>
            <person name="Unwin L."/>
            <person name="Whitehead S."/>
            <person name="Barrell B.G."/>
            <person name="Parkhill J."/>
        </authorList>
    </citation>
    <scope>NUCLEOTIDE SEQUENCE [LARGE SCALE GENOMIC DNA]</scope>
    <source>
        <strain>ATCC 700971 / NCTC 13129 / Biotype gravis</strain>
    </source>
</reference>
<accession>Q6NGY0</accession>
<keyword id="KW-0963">Cytoplasm</keyword>
<keyword id="KW-0328">Glycosyltransferase</keyword>
<keyword id="KW-0660">Purine salvage</keyword>
<keyword id="KW-1185">Reference proteome</keyword>
<keyword id="KW-0808">Transferase</keyword>
<feature type="chain" id="PRO_0000149376" description="Adenine phosphoribosyltransferase">
    <location>
        <begin position="1"/>
        <end position="184"/>
    </location>
</feature>
<protein>
    <recommendedName>
        <fullName evidence="1">Adenine phosphoribosyltransferase</fullName>
        <shortName evidence="1">APRT</shortName>
        <ecNumber evidence="1">2.4.2.7</ecNumber>
    </recommendedName>
</protein>
<proteinExistence type="inferred from homology"/>
<sequence>MTVPLYADAREAIACKTRFVPDFPVPGVIFEDLTPVLADAAAFSLIVDELAKNAMRLGADFIGGLDARGFLLGSAVAYKAGTGILAIRKKGKLPPPVHSEEYSLEYGTAALELPAEGLELEDKKVVLVDDVLATGGTLDAARKLIEACGATVSGYAVVLEVDGLGGRERLNDAPLVVINESATA</sequence>
<comment type="function">
    <text evidence="1">Catalyzes a salvage reaction resulting in the formation of AMP, that is energically less costly than de novo synthesis.</text>
</comment>
<comment type="catalytic activity">
    <reaction evidence="1">
        <text>AMP + diphosphate = 5-phospho-alpha-D-ribose 1-diphosphate + adenine</text>
        <dbReference type="Rhea" id="RHEA:16609"/>
        <dbReference type="ChEBI" id="CHEBI:16708"/>
        <dbReference type="ChEBI" id="CHEBI:33019"/>
        <dbReference type="ChEBI" id="CHEBI:58017"/>
        <dbReference type="ChEBI" id="CHEBI:456215"/>
        <dbReference type="EC" id="2.4.2.7"/>
    </reaction>
</comment>
<comment type="pathway">
    <text evidence="1">Purine metabolism; AMP biosynthesis via salvage pathway; AMP from adenine: step 1/1.</text>
</comment>
<comment type="subunit">
    <text evidence="1">Homodimer.</text>
</comment>
<comment type="subcellular location">
    <subcellularLocation>
        <location evidence="1">Cytoplasm</location>
    </subcellularLocation>
</comment>
<comment type="similarity">
    <text evidence="1">Belongs to the purine/pyrimidine phosphoribosyltransferase family.</text>
</comment>
<name>APT_CORDI</name>
<evidence type="ECO:0000255" key="1">
    <source>
        <dbReference type="HAMAP-Rule" id="MF_00004"/>
    </source>
</evidence>